<protein>
    <recommendedName>
        <fullName evidence="1">Large ribosomal subunit protein uL24</fullName>
    </recommendedName>
    <alternativeName>
        <fullName evidence="3">50S ribosomal protein L24</fullName>
    </alternativeName>
</protein>
<feature type="chain" id="PRO_0000241568" description="Large ribosomal subunit protein uL24">
    <location>
        <begin position="1"/>
        <end position="106"/>
    </location>
</feature>
<feature type="region of interest" description="Disordered" evidence="2">
    <location>
        <begin position="69"/>
        <end position="106"/>
    </location>
</feature>
<evidence type="ECO:0000255" key="1">
    <source>
        <dbReference type="HAMAP-Rule" id="MF_01326"/>
    </source>
</evidence>
<evidence type="ECO:0000256" key="2">
    <source>
        <dbReference type="SAM" id="MobiDB-lite"/>
    </source>
</evidence>
<evidence type="ECO:0000305" key="3"/>
<gene>
    <name evidence="1" type="primary">rplX</name>
    <name type="ordered locus">BF3992</name>
</gene>
<proteinExistence type="inferred from homology"/>
<name>RL24_BACFN</name>
<sequence>MSKLHIKKGDTVYVNAGEDKGKTGRVLKVLVKEGRAIVEGINMVSKSTKPNAKNPQGGIVKQEAPIHISNLNPVDPKTGKATRVGRKVSSEGTLVRYSKKSGEEIK</sequence>
<accession>Q5L8C0</accession>
<keyword id="KW-0687">Ribonucleoprotein</keyword>
<keyword id="KW-0689">Ribosomal protein</keyword>
<keyword id="KW-0694">RNA-binding</keyword>
<keyword id="KW-0699">rRNA-binding</keyword>
<comment type="function">
    <text evidence="1">One of two assembly initiator proteins, it binds directly to the 5'-end of the 23S rRNA, where it nucleates assembly of the 50S subunit.</text>
</comment>
<comment type="function">
    <text evidence="1">One of the proteins that surrounds the polypeptide exit tunnel on the outside of the subunit.</text>
</comment>
<comment type="subunit">
    <text evidence="1">Part of the 50S ribosomal subunit.</text>
</comment>
<comment type="similarity">
    <text evidence="1">Belongs to the universal ribosomal protein uL24 family.</text>
</comment>
<organism>
    <name type="scientific">Bacteroides fragilis (strain ATCC 25285 / DSM 2151 / CCUG 4856 / JCM 11019 / LMG 10263 / NCTC 9343 / Onslow / VPI 2553 / EN-2)</name>
    <dbReference type="NCBI Taxonomy" id="272559"/>
    <lineage>
        <taxon>Bacteria</taxon>
        <taxon>Pseudomonadati</taxon>
        <taxon>Bacteroidota</taxon>
        <taxon>Bacteroidia</taxon>
        <taxon>Bacteroidales</taxon>
        <taxon>Bacteroidaceae</taxon>
        <taxon>Bacteroides</taxon>
    </lineage>
</organism>
<dbReference type="EMBL" id="CR626927">
    <property type="protein sequence ID" value="CAH09668.1"/>
    <property type="molecule type" value="Genomic_DNA"/>
</dbReference>
<dbReference type="RefSeq" id="WP_005791554.1">
    <property type="nucleotide sequence ID" value="NZ_UFTH01000001.1"/>
</dbReference>
<dbReference type="SMR" id="Q5L8C0"/>
<dbReference type="PaxDb" id="272559-BF9343_3887"/>
<dbReference type="GeneID" id="93105313"/>
<dbReference type="KEGG" id="bfs:BF9343_3887"/>
<dbReference type="eggNOG" id="COG0198">
    <property type="taxonomic scope" value="Bacteria"/>
</dbReference>
<dbReference type="HOGENOM" id="CLU_093315_2_0_10"/>
<dbReference type="Proteomes" id="UP000006731">
    <property type="component" value="Chromosome"/>
</dbReference>
<dbReference type="GO" id="GO:1990904">
    <property type="term" value="C:ribonucleoprotein complex"/>
    <property type="evidence" value="ECO:0007669"/>
    <property type="project" value="UniProtKB-KW"/>
</dbReference>
<dbReference type="GO" id="GO:0005840">
    <property type="term" value="C:ribosome"/>
    <property type="evidence" value="ECO:0007669"/>
    <property type="project" value="UniProtKB-KW"/>
</dbReference>
<dbReference type="GO" id="GO:0019843">
    <property type="term" value="F:rRNA binding"/>
    <property type="evidence" value="ECO:0007669"/>
    <property type="project" value="UniProtKB-UniRule"/>
</dbReference>
<dbReference type="GO" id="GO:0003735">
    <property type="term" value="F:structural constituent of ribosome"/>
    <property type="evidence" value="ECO:0007669"/>
    <property type="project" value="InterPro"/>
</dbReference>
<dbReference type="GO" id="GO:0006412">
    <property type="term" value="P:translation"/>
    <property type="evidence" value="ECO:0007669"/>
    <property type="project" value="UniProtKB-UniRule"/>
</dbReference>
<dbReference type="CDD" id="cd06089">
    <property type="entry name" value="KOW_RPL26"/>
    <property type="match status" value="1"/>
</dbReference>
<dbReference type="FunFam" id="2.30.30.30:FF:000004">
    <property type="entry name" value="50S ribosomal protein L24"/>
    <property type="match status" value="1"/>
</dbReference>
<dbReference type="Gene3D" id="2.30.30.30">
    <property type="match status" value="1"/>
</dbReference>
<dbReference type="HAMAP" id="MF_01326_B">
    <property type="entry name" value="Ribosomal_uL24_B"/>
    <property type="match status" value="1"/>
</dbReference>
<dbReference type="InterPro" id="IPR005824">
    <property type="entry name" value="KOW"/>
</dbReference>
<dbReference type="InterPro" id="IPR014722">
    <property type="entry name" value="Rib_uL2_dom2"/>
</dbReference>
<dbReference type="InterPro" id="IPR003256">
    <property type="entry name" value="Ribosomal_uL24"/>
</dbReference>
<dbReference type="InterPro" id="IPR041988">
    <property type="entry name" value="Ribosomal_uL24_KOW"/>
</dbReference>
<dbReference type="InterPro" id="IPR008991">
    <property type="entry name" value="Translation_prot_SH3-like_sf"/>
</dbReference>
<dbReference type="NCBIfam" id="TIGR01079">
    <property type="entry name" value="rplX_bact"/>
    <property type="match status" value="1"/>
</dbReference>
<dbReference type="PANTHER" id="PTHR12903">
    <property type="entry name" value="MITOCHONDRIAL RIBOSOMAL PROTEIN L24"/>
    <property type="match status" value="1"/>
</dbReference>
<dbReference type="Pfam" id="PF00467">
    <property type="entry name" value="KOW"/>
    <property type="match status" value="1"/>
</dbReference>
<dbReference type="Pfam" id="PF17136">
    <property type="entry name" value="ribosomal_L24"/>
    <property type="match status" value="1"/>
</dbReference>
<dbReference type="SMART" id="SM00739">
    <property type="entry name" value="KOW"/>
    <property type="match status" value="1"/>
</dbReference>
<dbReference type="SUPFAM" id="SSF50104">
    <property type="entry name" value="Translation proteins SH3-like domain"/>
    <property type="match status" value="1"/>
</dbReference>
<reference key="1">
    <citation type="journal article" date="2005" name="Science">
        <title>Extensive DNA inversions in the B. fragilis genome control variable gene expression.</title>
        <authorList>
            <person name="Cerdeno-Tarraga A.-M."/>
            <person name="Patrick S."/>
            <person name="Crossman L.C."/>
            <person name="Blakely G."/>
            <person name="Abratt V."/>
            <person name="Lennard N."/>
            <person name="Poxton I."/>
            <person name="Duerden B."/>
            <person name="Harris B."/>
            <person name="Quail M.A."/>
            <person name="Barron A."/>
            <person name="Clark L."/>
            <person name="Corton C."/>
            <person name="Doggett J."/>
            <person name="Holden M.T.G."/>
            <person name="Larke N."/>
            <person name="Line A."/>
            <person name="Lord A."/>
            <person name="Norbertczak H."/>
            <person name="Ormond D."/>
            <person name="Price C."/>
            <person name="Rabbinowitsch E."/>
            <person name="Woodward J."/>
            <person name="Barrell B.G."/>
            <person name="Parkhill J."/>
        </authorList>
    </citation>
    <scope>NUCLEOTIDE SEQUENCE [LARGE SCALE GENOMIC DNA]</scope>
    <source>
        <strain>ATCC 25285 / DSM 2151 / CCUG 4856 / JCM 11019 / LMG 10263 / NCTC 9343 / Onslow / VPI 2553 / EN-2</strain>
    </source>
</reference>